<accession>Q8BMS4</accession>
<accession>Q3TCX5</accession>
<accession>Q6P918</accession>
<accession>Q8BM28</accession>
<sequence>MWRGGRLGSRGVRLLETLGFGCPSAVAQPPRLTSRSAYSGTQLTRNLQIKPWELGEHGTMCFRSYRMALSCLSRVKTYRTPWKRLYSTSQTTVDSREVKNFQALAHTWWDEYGKFAPLHSMNDLRVPFIRDNLLKTSASHHPGKPLSGMKILDVGCGGGLLTEPLGRLGASVVGIDPVAENIKIAQHHKSFDPVLDKRIQYKVCSLEEAVDESAECFDAVVASEVVEHVSHLEMFIQCCYQVLKPGGSLFITTVNKTQLSYALGIVFAEQIAGIVPKGTHTWEKFVSPEKLESILEPNGLSVETVAGLVYNPFSGYWHWSENTSLNYAAHAVRSRAQEHQEPAESALKGETGALHANTSGSPSVREEQRT</sequence>
<feature type="transit peptide" description="Mitochondrion" evidence="1">
    <location>
        <begin position="1"/>
        <end position="86"/>
    </location>
</feature>
<feature type="chain" id="PRO_0000035927" description="Ubiquinone biosynthesis O-methyltransferase, mitochondrial">
    <location>
        <begin position="87"/>
        <end position="370"/>
    </location>
</feature>
<feature type="region of interest" description="Disordered" evidence="2">
    <location>
        <begin position="336"/>
        <end position="370"/>
    </location>
</feature>
<feature type="binding site" evidence="1">
    <location>
        <position position="125"/>
    </location>
    <ligand>
        <name>S-adenosyl-L-methionine</name>
        <dbReference type="ChEBI" id="CHEBI:59789"/>
    </ligand>
</feature>
<feature type="binding site" evidence="1">
    <location>
        <position position="155"/>
    </location>
    <ligand>
        <name>S-adenosyl-L-methionine</name>
        <dbReference type="ChEBI" id="CHEBI:59789"/>
    </ligand>
</feature>
<feature type="binding site" evidence="1">
    <location>
        <position position="176"/>
    </location>
    <ligand>
        <name>S-adenosyl-L-methionine</name>
        <dbReference type="ChEBI" id="CHEBI:59789"/>
    </ligand>
</feature>
<feature type="binding site" evidence="1">
    <location>
        <position position="223"/>
    </location>
    <ligand>
        <name>S-adenosyl-L-methionine</name>
        <dbReference type="ChEBI" id="CHEBI:59789"/>
    </ligand>
</feature>
<feature type="binding site" evidence="1">
    <location>
        <position position="224"/>
    </location>
    <ligand>
        <name>Mg(2+)</name>
        <dbReference type="ChEBI" id="CHEBI:18420"/>
    </ligand>
</feature>
<feature type="binding site" evidence="1">
    <location>
        <position position="227"/>
    </location>
    <ligand>
        <name>Mg(2+)</name>
        <dbReference type="ChEBI" id="CHEBI:18420"/>
    </ligand>
</feature>
<feature type="binding site" evidence="1">
    <location>
        <position position="228"/>
    </location>
    <ligand>
        <name>Mg(2+)</name>
        <dbReference type="ChEBI" id="CHEBI:18420"/>
    </ligand>
</feature>
<feature type="modified residue" description="N6-acetyllysine" evidence="4">
    <location>
        <position position="144"/>
    </location>
</feature>
<feature type="modified residue" description="N6-acetyllysine" evidence="4">
    <location>
        <position position="150"/>
    </location>
</feature>
<feature type="modified residue" description="N6-acetyllysine" evidence="4">
    <location>
        <position position="197"/>
    </location>
</feature>
<feature type="sequence conflict" description="In Ref. 2; AAH60960." evidence="3" ref="2">
    <original>N</original>
    <variation>Y</variation>
    <location>
        <position position="298"/>
    </location>
</feature>
<comment type="function">
    <text evidence="1">O-methyltransferase required for two non-consecutive steps during ubiquinone biosynthesis. Catalyzes the 2 O-methylation of 3,4-dihydroxy-5-(all-trans-decaprenyl)benzoic acid into 4-hydroxy-3-methoxy-5-(all-trans-decaprenyl)benzoic acid. Also catalyzes the last step of ubiquinone biosynthesis by mediating methylation of 3-demethylubiquinone into ubiquinone. Also able to mediate the methylation of 3-demethylubiquinol-10 into ubiquinol-10.</text>
</comment>
<comment type="catalytic activity">
    <reaction evidence="1">
        <text>3,4-dihydroxy-5-(all-trans-decaprenyl)benzoate + S-adenosyl-L-methionine = 4-hydroxy-3-methoxy-5-(all-trans-decaprenyl)benzoate + S-adenosyl-L-homocysteine + H(+)</text>
        <dbReference type="Rhea" id="RHEA:44492"/>
        <dbReference type="ChEBI" id="CHEBI:15378"/>
        <dbReference type="ChEBI" id="CHEBI:57856"/>
        <dbReference type="ChEBI" id="CHEBI:59789"/>
        <dbReference type="ChEBI" id="CHEBI:62793"/>
        <dbReference type="ChEBI" id="CHEBI:62796"/>
        <dbReference type="EC" id="2.1.1.114"/>
    </reaction>
</comment>
<comment type="catalytic activity">
    <reaction evidence="1">
        <text>a 3-demethylubiquinone + S-adenosyl-L-methionine = a ubiquinone + S-adenosyl-L-homocysteine</text>
        <dbReference type="Rhea" id="RHEA:81215"/>
        <dbReference type="Rhea" id="RHEA-COMP:9565"/>
        <dbReference type="Rhea" id="RHEA-COMP:19654"/>
        <dbReference type="ChEBI" id="CHEBI:16389"/>
        <dbReference type="ChEBI" id="CHEBI:57856"/>
        <dbReference type="ChEBI" id="CHEBI:59789"/>
        <dbReference type="ChEBI" id="CHEBI:231825"/>
    </reaction>
</comment>
<comment type="catalytic activity">
    <reaction evidence="1">
        <text>3-demethylubiquinol-10 + S-adenosyl-L-methionine = ubiquinol-10 + S-adenosyl-L-homocysteine + H(+)</text>
        <dbReference type="Rhea" id="RHEA:44412"/>
        <dbReference type="ChEBI" id="CHEBI:15378"/>
        <dbReference type="ChEBI" id="CHEBI:57856"/>
        <dbReference type="ChEBI" id="CHEBI:59789"/>
        <dbReference type="ChEBI" id="CHEBI:64182"/>
        <dbReference type="ChEBI" id="CHEBI:64183"/>
        <dbReference type="EC" id="2.1.1.64"/>
    </reaction>
</comment>
<comment type="cofactor">
    <cofactor evidence="1">
        <name>Mg(2+)</name>
        <dbReference type="ChEBI" id="CHEBI:18420"/>
    </cofactor>
</comment>
<comment type="pathway">
    <text evidence="1">Cofactor biosynthesis; ubiquinone biosynthesis.</text>
</comment>
<comment type="subunit">
    <text evidence="1">Component of a multi-subunit COQ enzyme complex, composed of at least COQ3, COQ4, COQ5, COQ6, COQ7 and COQ9.</text>
</comment>
<comment type="subcellular location">
    <subcellularLocation>
        <location evidence="1">Mitochondrion inner membrane</location>
        <topology evidence="1">Peripheral membrane protein</topology>
        <orientation evidence="1">Matrix side</orientation>
    </subcellularLocation>
</comment>
<comment type="similarity">
    <text evidence="1">Belongs to the class I-like SAM-binding methyltransferase superfamily. UbiG/COQ3 family.</text>
</comment>
<comment type="sequence caution" evidence="3">
    <conflict type="erroneous initiation">
        <sequence resource="EMBL-CDS" id="BAC29030"/>
    </conflict>
</comment>
<proteinExistence type="evidence at protein level"/>
<reference key="1">
    <citation type="journal article" date="2005" name="Science">
        <title>The transcriptional landscape of the mammalian genome.</title>
        <authorList>
            <person name="Carninci P."/>
            <person name="Kasukawa T."/>
            <person name="Katayama S."/>
            <person name="Gough J."/>
            <person name="Frith M.C."/>
            <person name="Maeda N."/>
            <person name="Oyama R."/>
            <person name="Ravasi T."/>
            <person name="Lenhard B."/>
            <person name="Wells C."/>
            <person name="Kodzius R."/>
            <person name="Shimokawa K."/>
            <person name="Bajic V.B."/>
            <person name="Brenner S.E."/>
            <person name="Batalov S."/>
            <person name="Forrest A.R."/>
            <person name="Zavolan M."/>
            <person name="Davis M.J."/>
            <person name="Wilming L.G."/>
            <person name="Aidinis V."/>
            <person name="Allen J.E."/>
            <person name="Ambesi-Impiombato A."/>
            <person name="Apweiler R."/>
            <person name="Aturaliya R.N."/>
            <person name="Bailey T.L."/>
            <person name="Bansal M."/>
            <person name="Baxter L."/>
            <person name="Beisel K.W."/>
            <person name="Bersano T."/>
            <person name="Bono H."/>
            <person name="Chalk A.M."/>
            <person name="Chiu K.P."/>
            <person name="Choudhary V."/>
            <person name="Christoffels A."/>
            <person name="Clutterbuck D.R."/>
            <person name="Crowe M.L."/>
            <person name="Dalla E."/>
            <person name="Dalrymple B.P."/>
            <person name="de Bono B."/>
            <person name="Della Gatta G."/>
            <person name="di Bernardo D."/>
            <person name="Down T."/>
            <person name="Engstrom P."/>
            <person name="Fagiolini M."/>
            <person name="Faulkner G."/>
            <person name="Fletcher C.F."/>
            <person name="Fukushima T."/>
            <person name="Furuno M."/>
            <person name="Futaki S."/>
            <person name="Gariboldi M."/>
            <person name="Georgii-Hemming P."/>
            <person name="Gingeras T.R."/>
            <person name="Gojobori T."/>
            <person name="Green R.E."/>
            <person name="Gustincich S."/>
            <person name="Harbers M."/>
            <person name="Hayashi Y."/>
            <person name="Hensch T.K."/>
            <person name="Hirokawa N."/>
            <person name="Hill D."/>
            <person name="Huminiecki L."/>
            <person name="Iacono M."/>
            <person name="Ikeo K."/>
            <person name="Iwama A."/>
            <person name="Ishikawa T."/>
            <person name="Jakt M."/>
            <person name="Kanapin A."/>
            <person name="Katoh M."/>
            <person name="Kawasawa Y."/>
            <person name="Kelso J."/>
            <person name="Kitamura H."/>
            <person name="Kitano H."/>
            <person name="Kollias G."/>
            <person name="Krishnan S.P."/>
            <person name="Kruger A."/>
            <person name="Kummerfeld S.K."/>
            <person name="Kurochkin I.V."/>
            <person name="Lareau L.F."/>
            <person name="Lazarevic D."/>
            <person name="Lipovich L."/>
            <person name="Liu J."/>
            <person name="Liuni S."/>
            <person name="McWilliam S."/>
            <person name="Madan Babu M."/>
            <person name="Madera M."/>
            <person name="Marchionni L."/>
            <person name="Matsuda H."/>
            <person name="Matsuzawa S."/>
            <person name="Miki H."/>
            <person name="Mignone F."/>
            <person name="Miyake S."/>
            <person name="Morris K."/>
            <person name="Mottagui-Tabar S."/>
            <person name="Mulder N."/>
            <person name="Nakano N."/>
            <person name="Nakauchi H."/>
            <person name="Ng P."/>
            <person name="Nilsson R."/>
            <person name="Nishiguchi S."/>
            <person name="Nishikawa S."/>
            <person name="Nori F."/>
            <person name="Ohara O."/>
            <person name="Okazaki Y."/>
            <person name="Orlando V."/>
            <person name="Pang K.C."/>
            <person name="Pavan W.J."/>
            <person name="Pavesi G."/>
            <person name="Pesole G."/>
            <person name="Petrovsky N."/>
            <person name="Piazza S."/>
            <person name="Reed J."/>
            <person name="Reid J.F."/>
            <person name="Ring B.Z."/>
            <person name="Ringwald M."/>
            <person name="Rost B."/>
            <person name="Ruan Y."/>
            <person name="Salzberg S.L."/>
            <person name="Sandelin A."/>
            <person name="Schneider C."/>
            <person name="Schoenbach C."/>
            <person name="Sekiguchi K."/>
            <person name="Semple C.A."/>
            <person name="Seno S."/>
            <person name="Sessa L."/>
            <person name="Sheng Y."/>
            <person name="Shibata Y."/>
            <person name="Shimada H."/>
            <person name="Shimada K."/>
            <person name="Silva D."/>
            <person name="Sinclair B."/>
            <person name="Sperling S."/>
            <person name="Stupka E."/>
            <person name="Sugiura K."/>
            <person name="Sultana R."/>
            <person name="Takenaka Y."/>
            <person name="Taki K."/>
            <person name="Tammoja K."/>
            <person name="Tan S.L."/>
            <person name="Tang S."/>
            <person name="Taylor M.S."/>
            <person name="Tegner J."/>
            <person name="Teichmann S.A."/>
            <person name="Ueda H.R."/>
            <person name="van Nimwegen E."/>
            <person name="Verardo R."/>
            <person name="Wei C.L."/>
            <person name="Yagi K."/>
            <person name="Yamanishi H."/>
            <person name="Zabarovsky E."/>
            <person name="Zhu S."/>
            <person name="Zimmer A."/>
            <person name="Hide W."/>
            <person name="Bult C."/>
            <person name="Grimmond S.M."/>
            <person name="Teasdale R.D."/>
            <person name="Liu E.T."/>
            <person name="Brusic V."/>
            <person name="Quackenbush J."/>
            <person name="Wahlestedt C."/>
            <person name="Mattick J.S."/>
            <person name="Hume D.A."/>
            <person name="Kai C."/>
            <person name="Sasaki D."/>
            <person name="Tomaru Y."/>
            <person name="Fukuda S."/>
            <person name="Kanamori-Katayama M."/>
            <person name="Suzuki M."/>
            <person name="Aoki J."/>
            <person name="Arakawa T."/>
            <person name="Iida J."/>
            <person name="Imamura K."/>
            <person name="Itoh M."/>
            <person name="Kato T."/>
            <person name="Kawaji H."/>
            <person name="Kawagashira N."/>
            <person name="Kawashima T."/>
            <person name="Kojima M."/>
            <person name="Kondo S."/>
            <person name="Konno H."/>
            <person name="Nakano K."/>
            <person name="Ninomiya N."/>
            <person name="Nishio T."/>
            <person name="Okada M."/>
            <person name="Plessy C."/>
            <person name="Shibata K."/>
            <person name="Shiraki T."/>
            <person name="Suzuki S."/>
            <person name="Tagami M."/>
            <person name="Waki K."/>
            <person name="Watahiki A."/>
            <person name="Okamura-Oho Y."/>
            <person name="Suzuki H."/>
            <person name="Kawai J."/>
            <person name="Hayashizaki Y."/>
        </authorList>
    </citation>
    <scope>NUCLEOTIDE SEQUENCE [LARGE SCALE MRNA]</scope>
    <source>
        <strain>C57BL/6J</strain>
        <strain>NOD</strain>
        <tissue>Skin</tissue>
        <tissue>Urinary bladder</tissue>
    </source>
</reference>
<reference key="2">
    <citation type="journal article" date="2004" name="Genome Res.">
        <title>The status, quality, and expansion of the NIH full-length cDNA project: the Mammalian Gene Collection (MGC).</title>
        <authorList>
            <consortium name="The MGC Project Team"/>
        </authorList>
    </citation>
    <scope>NUCLEOTIDE SEQUENCE [LARGE SCALE MRNA]</scope>
    <source>
        <tissue>Kidney</tissue>
    </source>
</reference>
<reference key="3">
    <citation type="journal article" date="2010" name="Cell">
        <title>A tissue-specific atlas of mouse protein phosphorylation and expression.</title>
        <authorList>
            <person name="Huttlin E.L."/>
            <person name="Jedrychowski M.P."/>
            <person name="Elias J.E."/>
            <person name="Goswami T."/>
            <person name="Rad R."/>
            <person name="Beausoleil S.A."/>
            <person name="Villen J."/>
            <person name="Haas W."/>
            <person name="Sowa M.E."/>
            <person name="Gygi S.P."/>
        </authorList>
    </citation>
    <scope>IDENTIFICATION BY MASS SPECTROMETRY [LARGE SCALE ANALYSIS]</scope>
    <source>
        <tissue>Brain</tissue>
        <tissue>Brown adipose tissue</tissue>
        <tissue>Heart</tissue>
        <tissue>Kidney</tissue>
        <tissue>Liver</tissue>
        <tissue>Pancreas</tissue>
        <tissue>Spleen</tissue>
        <tissue>Testis</tissue>
    </source>
</reference>
<reference key="4">
    <citation type="journal article" date="2013" name="Proc. Natl. Acad. Sci. U.S.A.">
        <title>Label-free quantitative proteomics of the lysine acetylome in mitochondria identifies substrates of SIRT3 in metabolic pathways.</title>
        <authorList>
            <person name="Rardin M.J."/>
            <person name="Newman J.C."/>
            <person name="Held J.M."/>
            <person name="Cusack M.P."/>
            <person name="Sorensen D.J."/>
            <person name="Li B."/>
            <person name="Schilling B."/>
            <person name="Mooney S.D."/>
            <person name="Kahn C.R."/>
            <person name="Verdin E."/>
            <person name="Gibson B.W."/>
        </authorList>
    </citation>
    <scope>ACETYLATION [LARGE SCALE ANALYSIS] AT LYS-144; LYS-150 AND LYS-197</scope>
    <scope>IDENTIFICATION BY MASS SPECTROMETRY [LARGE SCALE ANALYSIS]</scope>
    <source>
        <tissue>Liver</tissue>
    </source>
</reference>
<organism>
    <name type="scientific">Mus musculus</name>
    <name type="common">Mouse</name>
    <dbReference type="NCBI Taxonomy" id="10090"/>
    <lineage>
        <taxon>Eukaryota</taxon>
        <taxon>Metazoa</taxon>
        <taxon>Chordata</taxon>
        <taxon>Craniata</taxon>
        <taxon>Vertebrata</taxon>
        <taxon>Euteleostomi</taxon>
        <taxon>Mammalia</taxon>
        <taxon>Eutheria</taxon>
        <taxon>Euarchontoglires</taxon>
        <taxon>Glires</taxon>
        <taxon>Rodentia</taxon>
        <taxon>Myomorpha</taxon>
        <taxon>Muroidea</taxon>
        <taxon>Muridae</taxon>
        <taxon>Murinae</taxon>
        <taxon>Mus</taxon>
        <taxon>Mus</taxon>
    </lineage>
</organism>
<gene>
    <name evidence="1" type="primary">Coq3</name>
</gene>
<evidence type="ECO:0000255" key="1">
    <source>
        <dbReference type="HAMAP-Rule" id="MF_03190"/>
    </source>
</evidence>
<evidence type="ECO:0000256" key="2">
    <source>
        <dbReference type="SAM" id="MobiDB-lite"/>
    </source>
</evidence>
<evidence type="ECO:0000305" key="3"/>
<evidence type="ECO:0007744" key="4">
    <source>
    </source>
</evidence>
<keyword id="KW-0007">Acetylation</keyword>
<keyword id="KW-0460">Magnesium</keyword>
<keyword id="KW-0472">Membrane</keyword>
<keyword id="KW-0479">Metal-binding</keyword>
<keyword id="KW-0489">Methyltransferase</keyword>
<keyword id="KW-0496">Mitochondrion</keyword>
<keyword id="KW-0999">Mitochondrion inner membrane</keyword>
<keyword id="KW-1185">Reference proteome</keyword>
<keyword id="KW-0949">S-adenosyl-L-methionine</keyword>
<keyword id="KW-0808">Transferase</keyword>
<keyword id="KW-0809">Transit peptide</keyword>
<keyword id="KW-0831">Ubiquinone biosynthesis</keyword>
<protein>
    <recommendedName>
        <fullName evidence="1">Ubiquinone biosynthesis O-methyltransferase, mitochondrial</fullName>
    </recommendedName>
    <alternativeName>
        <fullName evidence="1">3-demethylubiquinol 3-O-methyltransferase</fullName>
        <ecNumber evidence="1">2.1.1.64</ecNumber>
    </alternativeName>
    <alternativeName>
        <fullName evidence="1">3-demethylubiquinone 3-O-methyltransferase</fullName>
        <ecNumber evidence="1">2.1.1.-</ecNumber>
    </alternativeName>
    <alternativeName>
        <fullName evidence="1">Polyprenyldihydroxybenzoate methyltransferase</fullName>
        <ecNumber evidence="1">2.1.1.114</ecNumber>
    </alternativeName>
</protein>
<name>COQ3_MOUSE</name>
<dbReference type="EC" id="2.1.1.64" evidence="1"/>
<dbReference type="EC" id="2.1.1.-" evidence="1"/>
<dbReference type="EC" id="2.1.1.114" evidence="1"/>
<dbReference type="EMBL" id="AK028680">
    <property type="protein sequence ID" value="BAC26063.1"/>
    <property type="molecule type" value="mRNA"/>
</dbReference>
<dbReference type="EMBL" id="AK035318">
    <property type="protein sequence ID" value="BAC29030.1"/>
    <property type="status" value="ALT_INIT"/>
    <property type="molecule type" value="mRNA"/>
</dbReference>
<dbReference type="EMBL" id="AK170488">
    <property type="protein sequence ID" value="BAE41830.1"/>
    <property type="molecule type" value="mRNA"/>
</dbReference>
<dbReference type="EMBL" id="BC060960">
    <property type="protein sequence ID" value="AAH60960.1"/>
    <property type="molecule type" value="mRNA"/>
</dbReference>
<dbReference type="CCDS" id="CCDS18003.1"/>
<dbReference type="RefSeq" id="NP_766275.1">
    <property type="nucleotide sequence ID" value="NM_172687.3"/>
</dbReference>
<dbReference type="RefSeq" id="XP_006537871.1">
    <property type="nucleotide sequence ID" value="XM_006537808.2"/>
</dbReference>
<dbReference type="SMR" id="Q8BMS4"/>
<dbReference type="BioGRID" id="230924">
    <property type="interactions" value="8"/>
</dbReference>
<dbReference type="ComplexPortal" id="CPX-3662">
    <property type="entry name" value="CoQ biosynthetic complex"/>
</dbReference>
<dbReference type="FunCoup" id="Q8BMS4">
    <property type="interactions" value="979"/>
</dbReference>
<dbReference type="IntAct" id="Q8BMS4">
    <property type="interactions" value="1"/>
</dbReference>
<dbReference type="MINT" id="Q8BMS4"/>
<dbReference type="STRING" id="10090.ENSMUSP00000029909"/>
<dbReference type="GlyGen" id="Q8BMS4">
    <property type="glycosylation" value="1 site, 1 O-linked glycan (1 site)"/>
</dbReference>
<dbReference type="iPTMnet" id="Q8BMS4"/>
<dbReference type="PhosphoSitePlus" id="Q8BMS4"/>
<dbReference type="SwissPalm" id="Q8BMS4"/>
<dbReference type="jPOST" id="Q8BMS4"/>
<dbReference type="PaxDb" id="10090-ENSMUSP00000029909"/>
<dbReference type="PeptideAtlas" id="Q8BMS4"/>
<dbReference type="ProteomicsDB" id="283353"/>
<dbReference type="Pumba" id="Q8BMS4"/>
<dbReference type="Antibodypedia" id="31993">
    <property type="antibodies" value="163 antibodies from 22 providers"/>
</dbReference>
<dbReference type="DNASU" id="230027"/>
<dbReference type="Ensembl" id="ENSMUST00000029909.3">
    <property type="protein sequence ID" value="ENSMUSP00000029909.3"/>
    <property type="gene ID" value="ENSMUSG00000028247.3"/>
</dbReference>
<dbReference type="GeneID" id="230027"/>
<dbReference type="KEGG" id="mmu:230027"/>
<dbReference type="UCSC" id="uc008sdj.1">
    <property type="organism name" value="mouse"/>
</dbReference>
<dbReference type="AGR" id="MGI:101813"/>
<dbReference type="CTD" id="51805"/>
<dbReference type="MGI" id="MGI:101813">
    <property type="gene designation" value="Coq3"/>
</dbReference>
<dbReference type="VEuPathDB" id="HostDB:ENSMUSG00000028247"/>
<dbReference type="eggNOG" id="KOG1270">
    <property type="taxonomic scope" value="Eukaryota"/>
</dbReference>
<dbReference type="GeneTree" id="ENSGT00390000007284"/>
<dbReference type="HOGENOM" id="CLU_042432_0_1_1"/>
<dbReference type="InParanoid" id="Q8BMS4"/>
<dbReference type="OMA" id="LASRWWD"/>
<dbReference type="OrthoDB" id="3265906at2759"/>
<dbReference type="PhylomeDB" id="Q8BMS4"/>
<dbReference type="TreeFam" id="TF314553"/>
<dbReference type="Reactome" id="R-MMU-2142789">
    <property type="pathway name" value="Ubiquinol biosynthesis"/>
</dbReference>
<dbReference type="UniPathway" id="UPA00232"/>
<dbReference type="BioGRID-ORCS" id="230027">
    <property type="hits" value="14 hits in 79 CRISPR screens"/>
</dbReference>
<dbReference type="ChiTaRS" id="Coq3">
    <property type="organism name" value="mouse"/>
</dbReference>
<dbReference type="PRO" id="PR:Q8BMS4"/>
<dbReference type="Proteomes" id="UP000000589">
    <property type="component" value="Chromosome 4"/>
</dbReference>
<dbReference type="RNAct" id="Q8BMS4">
    <property type="molecule type" value="protein"/>
</dbReference>
<dbReference type="Bgee" id="ENSMUSG00000028247">
    <property type="expression patterns" value="Expressed in soleus muscle and 249 other cell types or tissues"/>
</dbReference>
<dbReference type="GO" id="GO:0031314">
    <property type="term" value="C:extrinsic component of mitochondrial inner membrane"/>
    <property type="evidence" value="ECO:0007669"/>
    <property type="project" value="UniProtKB-UniRule"/>
</dbReference>
<dbReference type="GO" id="GO:0005743">
    <property type="term" value="C:mitochondrial inner membrane"/>
    <property type="evidence" value="ECO:0000266"/>
    <property type="project" value="ComplexPortal"/>
</dbReference>
<dbReference type="GO" id="GO:0005759">
    <property type="term" value="C:mitochondrial matrix"/>
    <property type="evidence" value="ECO:0000314"/>
    <property type="project" value="MGI"/>
</dbReference>
<dbReference type="GO" id="GO:0005739">
    <property type="term" value="C:mitochondrion"/>
    <property type="evidence" value="ECO:0007005"/>
    <property type="project" value="MGI"/>
</dbReference>
<dbReference type="GO" id="GO:0110142">
    <property type="term" value="C:ubiquinone biosynthesis complex"/>
    <property type="evidence" value="ECO:0007669"/>
    <property type="project" value="Ensembl"/>
</dbReference>
<dbReference type="GO" id="GO:0061542">
    <property type="term" value="F:3-demethylubiquinol 3-O-methyltransferase activity"/>
    <property type="evidence" value="ECO:0000266"/>
    <property type="project" value="MGI"/>
</dbReference>
<dbReference type="GO" id="GO:0120537">
    <property type="term" value="F:3-demethylubiquinone 3-O-methyltransferase activity"/>
    <property type="evidence" value="ECO:0000250"/>
    <property type="project" value="UniProtKB"/>
</dbReference>
<dbReference type="GO" id="GO:0010420">
    <property type="term" value="F:polyprenyldihydroxybenzoate methyltransferase activity"/>
    <property type="evidence" value="ECO:0000250"/>
    <property type="project" value="UniProtKB"/>
</dbReference>
<dbReference type="GO" id="GO:0006071">
    <property type="term" value="P:glycerol metabolic process"/>
    <property type="evidence" value="ECO:0007669"/>
    <property type="project" value="Ensembl"/>
</dbReference>
<dbReference type="GO" id="GO:0032259">
    <property type="term" value="P:methylation"/>
    <property type="evidence" value="ECO:0007669"/>
    <property type="project" value="UniProtKB-KW"/>
</dbReference>
<dbReference type="GO" id="GO:0006744">
    <property type="term" value="P:ubiquinone biosynthetic process"/>
    <property type="evidence" value="ECO:0000250"/>
    <property type="project" value="UniProtKB"/>
</dbReference>
<dbReference type="CDD" id="cd02440">
    <property type="entry name" value="AdoMet_MTases"/>
    <property type="match status" value="1"/>
</dbReference>
<dbReference type="FunFam" id="3.40.50.150:FF:000142">
    <property type="entry name" value="Ubiquinone biosynthesis O-methyltransferase, mitochondrial"/>
    <property type="match status" value="1"/>
</dbReference>
<dbReference type="Gene3D" id="3.40.50.150">
    <property type="entry name" value="Vaccinia Virus protein VP39"/>
    <property type="match status" value="1"/>
</dbReference>
<dbReference type="HAMAP" id="MF_00472">
    <property type="entry name" value="UbiG"/>
    <property type="match status" value="1"/>
</dbReference>
<dbReference type="InterPro" id="IPR029063">
    <property type="entry name" value="SAM-dependent_MTases_sf"/>
</dbReference>
<dbReference type="InterPro" id="IPR010233">
    <property type="entry name" value="UbiG_MeTrfase"/>
</dbReference>
<dbReference type="NCBIfam" id="TIGR01983">
    <property type="entry name" value="UbiG"/>
    <property type="match status" value="1"/>
</dbReference>
<dbReference type="PANTHER" id="PTHR43464">
    <property type="entry name" value="METHYLTRANSFERASE"/>
    <property type="match status" value="1"/>
</dbReference>
<dbReference type="PANTHER" id="PTHR43464:SF19">
    <property type="entry name" value="UBIQUINONE BIOSYNTHESIS O-METHYLTRANSFERASE, MITOCHONDRIAL"/>
    <property type="match status" value="1"/>
</dbReference>
<dbReference type="Pfam" id="PF13489">
    <property type="entry name" value="Methyltransf_23"/>
    <property type="match status" value="1"/>
</dbReference>
<dbReference type="SUPFAM" id="SSF53335">
    <property type="entry name" value="S-adenosyl-L-methionine-dependent methyltransferases"/>
    <property type="match status" value="1"/>
</dbReference>